<gene>
    <name evidence="1" type="primary">fadB</name>
    <name type="ordered locus">IL0011</name>
</gene>
<sequence>MIYQGESIRVDFIEPGFAELQFDAKGSVNKFDQATLEEFSEALTKLQNTDDLRGVIVTSSKSTFIVGADITEFLTLFSDQEKTRSWVAKASRVFDQLEDLPVPTVGAVTGFALGGGCEALLACDYRVADTTATIGLPEVKLGLIPGFGGTMRLPRVIGPDNALEWITTGKNNKALDALKVGAVDAVVEPENLTKAALNLAKAAAAGQQDWKAKRQPKLEPLKANDTELMMTLVTAKGMIAAKAGKHYPAPHKALEAIENGAREHREGALTAENNAFFDLTQTEACQAQVGIFLADQAVKGKSKKYAKAATKEIKTAGVLGAGIMGGGIAYQSALKGVPAVMKDIKQDALDLGMKEAGKILKKGVERGKVNNEKMIKILSSITPTLLNDAVKDVDIVVEAVVENPKVKGSVLAEIEGVIGDDAILTSNTSTISITELAKNLKRPEKFCGMHFFNPVHKMPLVEIIRGEKTSDDTVNAVVAYALKLGKTPIVVNDCPGFLVNRVLFPYLAGFAGMVDEGVDFVGIDKVMEKQFGWPMGPAYLSDVVGIDTADHCTVVMEAGFPTRMKRDESSAIAKLAAAERYGQKNGKGFYVYGTDKKGKPTKEADPATYELLGCEQGKKLDADEVIARCMIPMVNEVVRCLEEDIVGSAAEADMALLYGLGFPPFRGGPFRYLETLGMDNFIQLADKYAHLGEIYQVTDGMREMAKAGKSYFDTTSAK</sequence>
<evidence type="ECO:0000255" key="1">
    <source>
        <dbReference type="HAMAP-Rule" id="MF_01621"/>
    </source>
</evidence>
<dbReference type="EC" id="4.2.1.17" evidence="1"/>
<dbReference type="EC" id="5.1.2.3" evidence="1"/>
<dbReference type="EC" id="5.3.3.8" evidence="1"/>
<dbReference type="EC" id="1.1.1.35" evidence="1"/>
<dbReference type="EMBL" id="AE017340">
    <property type="protein sequence ID" value="AAV80855.1"/>
    <property type="molecule type" value="Genomic_DNA"/>
</dbReference>
<dbReference type="RefSeq" id="WP_011233275.1">
    <property type="nucleotide sequence ID" value="NC_006512.1"/>
</dbReference>
<dbReference type="SMR" id="Q5QXH7"/>
<dbReference type="STRING" id="283942.IL0011"/>
<dbReference type="GeneID" id="41335159"/>
<dbReference type="KEGG" id="ilo:IL0011"/>
<dbReference type="eggNOG" id="COG1024">
    <property type="taxonomic scope" value="Bacteria"/>
</dbReference>
<dbReference type="eggNOG" id="COG1250">
    <property type="taxonomic scope" value="Bacteria"/>
</dbReference>
<dbReference type="HOGENOM" id="CLU_009834_16_3_6"/>
<dbReference type="OrthoDB" id="5389341at2"/>
<dbReference type="UniPathway" id="UPA00659"/>
<dbReference type="Proteomes" id="UP000001171">
    <property type="component" value="Chromosome"/>
</dbReference>
<dbReference type="GO" id="GO:0036125">
    <property type="term" value="C:fatty acid beta-oxidation multienzyme complex"/>
    <property type="evidence" value="ECO:0007669"/>
    <property type="project" value="InterPro"/>
</dbReference>
<dbReference type="GO" id="GO:0008692">
    <property type="term" value="F:3-hydroxybutyryl-CoA epimerase activity"/>
    <property type="evidence" value="ECO:0007669"/>
    <property type="project" value="UniProtKB-UniRule"/>
</dbReference>
<dbReference type="GO" id="GO:0004165">
    <property type="term" value="F:delta(3)-delta(2)-enoyl-CoA isomerase activity"/>
    <property type="evidence" value="ECO:0007669"/>
    <property type="project" value="UniProtKB-UniRule"/>
</dbReference>
<dbReference type="GO" id="GO:0004300">
    <property type="term" value="F:enoyl-CoA hydratase activity"/>
    <property type="evidence" value="ECO:0007669"/>
    <property type="project" value="UniProtKB-UniRule"/>
</dbReference>
<dbReference type="GO" id="GO:0016509">
    <property type="term" value="F:long-chain-3-hydroxyacyl-CoA dehydrogenase activity"/>
    <property type="evidence" value="ECO:0007669"/>
    <property type="project" value="TreeGrafter"/>
</dbReference>
<dbReference type="GO" id="GO:0070403">
    <property type="term" value="F:NAD+ binding"/>
    <property type="evidence" value="ECO:0007669"/>
    <property type="project" value="InterPro"/>
</dbReference>
<dbReference type="GO" id="GO:0006635">
    <property type="term" value="P:fatty acid beta-oxidation"/>
    <property type="evidence" value="ECO:0007669"/>
    <property type="project" value="UniProtKB-UniRule"/>
</dbReference>
<dbReference type="CDD" id="cd06558">
    <property type="entry name" value="crotonase-like"/>
    <property type="match status" value="1"/>
</dbReference>
<dbReference type="FunFam" id="3.40.50.720:FF:000009">
    <property type="entry name" value="Fatty oxidation complex, alpha subunit"/>
    <property type="match status" value="1"/>
</dbReference>
<dbReference type="Gene3D" id="1.10.1040.50">
    <property type="match status" value="1"/>
</dbReference>
<dbReference type="Gene3D" id="3.90.226.10">
    <property type="entry name" value="2-enoyl-CoA Hydratase, Chain A, domain 1"/>
    <property type="match status" value="1"/>
</dbReference>
<dbReference type="Gene3D" id="3.40.50.720">
    <property type="entry name" value="NAD(P)-binding Rossmann-like Domain"/>
    <property type="match status" value="1"/>
</dbReference>
<dbReference type="HAMAP" id="MF_01621">
    <property type="entry name" value="FadB"/>
    <property type="match status" value="1"/>
</dbReference>
<dbReference type="InterPro" id="IPR006180">
    <property type="entry name" value="3-OHacyl-CoA_DH_CS"/>
</dbReference>
<dbReference type="InterPro" id="IPR006176">
    <property type="entry name" value="3-OHacyl-CoA_DH_NAD-bd"/>
</dbReference>
<dbReference type="InterPro" id="IPR006108">
    <property type="entry name" value="3HC_DH_C"/>
</dbReference>
<dbReference type="InterPro" id="IPR008927">
    <property type="entry name" value="6-PGluconate_DH-like_C_sf"/>
</dbReference>
<dbReference type="InterPro" id="IPR029045">
    <property type="entry name" value="ClpP/crotonase-like_dom_sf"/>
</dbReference>
<dbReference type="InterPro" id="IPR018376">
    <property type="entry name" value="Enoyl-CoA_hyd/isom_CS"/>
</dbReference>
<dbReference type="InterPro" id="IPR001753">
    <property type="entry name" value="Enoyl-CoA_hydra/iso"/>
</dbReference>
<dbReference type="InterPro" id="IPR050136">
    <property type="entry name" value="FA_oxidation_alpha_subunit"/>
</dbReference>
<dbReference type="InterPro" id="IPR012799">
    <property type="entry name" value="FadB"/>
</dbReference>
<dbReference type="InterPro" id="IPR036291">
    <property type="entry name" value="NAD(P)-bd_dom_sf"/>
</dbReference>
<dbReference type="NCBIfam" id="TIGR02437">
    <property type="entry name" value="FadB"/>
    <property type="match status" value="1"/>
</dbReference>
<dbReference type="NCBIfam" id="NF008727">
    <property type="entry name" value="PRK11730.1"/>
    <property type="match status" value="1"/>
</dbReference>
<dbReference type="PANTHER" id="PTHR43612">
    <property type="entry name" value="TRIFUNCTIONAL ENZYME SUBUNIT ALPHA"/>
    <property type="match status" value="1"/>
</dbReference>
<dbReference type="PANTHER" id="PTHR43612:SF3">
    <property type="entry name" value="TRIFUNCTIONAL ENZYME SUBUNIT ALPHA, MITOCHONDRIAL"/>
    <property type="match status" value="1"/>
</dbReference>
<dbReference type="Pfam" id="PF00725">
    <property type="entry name" value="3HCDH"/>
    <property type="match status" value="2"/>
</dbReference>
<dbReference type="Pfam" id="PF02737">
    <property type="entry name" value="3HCDH_N"/>
    <property type="match status" value="1"/>
</dbReference>
<dbReference type="Pfam" id="PF00378">
    <property type="entry name" value="ECH_1"/>
    <property type="match status" value="1"/>
</dbReference>
<dbReference type="SUPFAM" id="SSF48179">
    <property type="entry name" value="6-phosphogluconate dehydrogenase C-terminal domain-like"/>
    <property type="match status" value="2"/>
</dbReference>
<dbReference type="SUPFAM" id="SSF52096">
    <property type="entry name" value="ClpP/crotonase"/>
    <property type="match status" value="1"/>
</dbReference>
<dbReference type="SUPFAM" id="SSF51735">
    <property type="entry name" value="NAD(P)-binding Rossmann-fold domains"/>
    <property type="match status" value="1"/>
</dbReference>
<dbReference type="PROSITE" id="PS00067">
    <property type="entry name" value="3HCDH"/>
    <property type="match status" value="1"/>
</dbReference>
<dbReference type="PROSITE" id="PS00166">
    <property type="entry name" value="ENOYL_COA_HYDRATASE"/>
    <property type="match status" value="1"/>
</dbReference>
<name>FADB_IDILO</name>
<accession>Q5QXH7</accession>
<feature type="chain" id="PRO_0000109271" description="Fatty acid oxidation complex subunit alpha">
    <location>
        <begin position="1"/>
        <end position="718"/>
    </location>
</feature>
<feature type="region of interest" description="Enoyl-CoA hydratase/isomerase" evidence="1">
    <location>
        <begin position="1"/>
        <end position="188"/>
    </location>
</feature>
<feature type="region of interest" description="3-hydroxyacyl-CoA dehydrogenase" evidence="1">
    <location>
        <begin position="310"/>
        <end position="718"/>
    </location>
</feature>
<feature type="active site" description="For 3-hydroxyacyl-CoA dehydrogenase activity" evidence="1">
    <location>
        <position position="450"/>
    </location>
</feature>
<feature type="binding site" evidence="1">
    <location>
        <position position="295"/>
    </location>
    <ligand>
        <name>substrate</name>
    </ligand>
</feature>
<feature type="binding site" evidence="1">
    <location>
        <position position="324"/>
    </location>
    <ligand>
        <name>NAD(+)</name>
        <dbReference type="ChEBI" id="CHEBI:57540"/>
    </ligand>
</feature>
<feature type="binding site" evidence="1">
    <location>
        <position position="343"/>
    </location>
    <ligand>
        <name>NAD(+)</name>
        <dbReference type="ChEBI" id="CHEBI:57540"/>
    </ligand>
</feature>
<feature type="binding site" evidence="1">
    <location>
        <begin position="400"/>
        <end position="402"/>
    </location>
    <ligand>
        <name>NAD(+)</name>
        <dbReference type="ChEBI" id="CHEBI:57540"/>
    </ligand>
</feature>
<feature type="binding site" evidence="1">
    <location>
        <position position="407"/>
    </location>
    <ligand>
        <name>NAD(+)</name>
        <dbReference type="ChEBI" id="CHEBI:57540"/>
    </ligand>
</feature>
<feature type="binding site" evidence="1">
    <location>
        <position position="429"/>
    </location>
    <ligand>
        <name>NAD(+)</name>
        <dbReference type="ChEBI" id="CHEBI:57540"/>
    </ligand>
</feature>
<feature type="binding site" evidence="1">
    <location>
        <position position="453"/>
    </location>
    <ligand>
        <name>NAD(+)</name>
        <dbReference type="ChEBI" id="CHEBI:57540"/>
    </ligand>
</feature>
<feature type="binding site" evidence="1">
    <location>
        <position position="500"/>
    </location>
    <ligand>
        <name>substrate</name>
    </ligand>
</feature>
<feature type="binding site" evidence="1">
    <location>
        <position position="658"/>
    </location>
    <ligand>
        <name>substrate</name>
    </ligand>
</feature>
<feature type="site" description="Important for catalytic activity" evidence="1">
    <location>
        <position position="118"/>
    </location>
</feature>
<feature type="site" description="Important for catalytic activity" evidence="1">
    <location>
        <position position="138"/>
    </location>
</feature>
<keyword id="KW-0276">Fatty acid metabolism</keyword>
<keyword id="KW-0413">Isomerase</keyword>
<keyword id="KW-0442">Lipid degradation</keyword>
<keyword id="KW-0443">Lipid metabolism</keyword>
<keyword id="KW-0456">Lyase</keyword>
<keyword id="KW-0511">Multifunctional enzyme</keyword>
<keyword id="KW-0520">NAD</keyword>
<keyword id="KW-0560">Oxidoreductase</keyword>
<keyword id="KW-1185">Reference proteome</keyword>
<reference key="1">
    <citation type="journal article" date="2004" name="Proc. Natl. Acad. Sci. U.S.A.">
        <title>Genome sequence of the deep-sea gamma-proteobacterium Idiomarina loihiensis reveals amino acid fermentation as a source of carbon and energy.</title>
        <authorList>
            <person name="Hou S."/>
            <person name="Saw J.H."/>
            <person name="Lee K.S."/>
            <person name="Freitas T.A."/>
            <person name="Belisle C."/>
            <person name="Kawarabayasi Y."/>
            <person name="Donachie S.P."/>
            <person name="Pikina A."/>
            <person name="Galperin M.Y."/>
            <person name="Koonin E.V."/>
            <person name="Makarova K.S."/>
            <person name="Omelchenko M.V."/>
            <person name="Sorokin A."/>
            <person name="Wolf Y.I."/>
            <person name="Li Q.X."/>
            <person name="Keum Y.S."/>
            <person name="Campbell S."/>
            <person name="Denery J."/>
            <person name="Aizawa S."/>
            <person name="Shibata S."/>
            <person name="Malahoff A."/>
            <person name="Alam M."/>
        </authorList>
    </citation>
    <scope>NUCLEOTIDE SEQUENCE [LARGE SCALE GENOMIC DNA]</scope>
    <source>
        <strain>ATCC BAA-735 / DSM 15497 / L2-TR</strain>
    </source>
</reference>
<proteinExistence type="inferred from homology"/>
<protein>
    <recommendedName>
        <fullName evidence="1">Fatty acid oxidation complex subunit alpha</fullName>
    </recommendedName>
    <domain>
        <recommendedName>
            <fullName evidence="1">Enoyl-CoA hydratase/Delta(3)-cis-Delta(2)-trans-enoyl-CoA isomerase/3-hydroxybutyryl-CoA epimerase</fullName>
            <ecNumber evidence="1">4.2.1.17</ecNumber>
            <ecNumber evidence="1">5.1.2.3</ecNumber>
            <ecNumber evidence="1">5.3.3.8</ecNumber>
        </recommendedName>
    </domain>
    <domain>
        <recommendedName>
            <fullName evidence="1">3-hydroxyacyl-CoA dehydrogenase</fullName>
            <ecNumber evidence="1">1.1.1.35</ecNumber>
        </recommendedName>
    </domain>
</protein>
<organism>
    <name type="scientific">Idiomarina loihiensis (strain ATCC BAA-735 / DSM 15497 / L2-TR)</name>
    <dbReference type="NCBI Taxonomy" id="283942"/>
    <lineage>
        <taxon>Bacteria</taxon>
        <taxon>Pseudomonadati</taxon>
        <taxon>Pseudomonadota</taxon>
        <taxon>Gammaproteobacteria</taxon>
        <taxon>Alteromonadales</taxon>
        <taxon>Idiomarinaceae</taxon>
        <taxon>Idiomarina</taxon>
    </lineage>
</organism>
<comment type="function">
    <text evidence="1">Involved in the aerobic and anaerobic degradation of long-chain fatty acids via beta-oxidation cycle. Catalyzes the formation of 3-oxoacyl-CoA from enoyl-CoA via L-3-hydroxyacyl-CoA. It can also use D-3-hydroxyacyl-CoA and cis-3-enoyl-CoA as substrate.</text>
</comment>
<comment type="catalytic activity">
    <reaction evidence="1">
        <text>a (3S)-3-hydroxyacyl-CoA + NAD(+) = a 3-oxoacyl-CoA + NADH + H(+)</text>
        <dbReference type="Rhea" id="RHEA:22432"/>
        <dbReference type="ChEBI" id="CHEBI:15378"/>
        <dbReference type="ChEBI" id="CHEBI:57318"/>
        <dbReference type="ChEBI" id="CHEBI:57540"/>
        <dbReference type="ChEBI" id="CHEBI:57945"/>
        <dbReference type="ChEBI" id="CHEBI:90726"/>
        <dbReference type="EC" id="1.1.1.35"/>
    </reaction>
</comment>
<comment type="catalytic activity">
    <reaction evidence="1">
        <text>a (3S)-3-hydroxyacyl-CoA = a (2E)-enoyl-CoA + H2O</text>
        <dbReference type="Rhea" id="RHEA:16105"/>
        <dbReference type="ChEBI" id="CHEBI:15377"/>
        <dbReference type="ChEBI" id="CHEBI:57318"/>
        <dbReference type="ChEBI" id="CHEBI:58856"/>
        <dbReference type="EC" id="4.2.1.17"/>
    </reaction>
</comment>
<comment type="catalytic activity">
    <reaction evidence="1">
        <text>a 4-saturated-(3S)-3-hydroxyacyl-CoA = a (3E)-enoyl-CoA + H2O</text>
        <dbReference type="Rhea" id="RHEA:20724"/>
        <dbReference type="ChEBI" id="CHEBI:15377"/>
        <dbReference type="ChEBI" id="CHEBI:58521"/>
        <dbReference type="ChEBI" id="CHEBI:137480"/>
        <dbReference type="EC" id="4.2.1.17"/>
    </reaction>
</comment>
<comment type="catalytic activity">
    <reaction evidence="1">
        <text>(3S)-3-hydroxybutanoyl-CoA = (3R)-3-hydroxybutanoyl-CoA</text>
        <dbReference type="Rhea" id="RHEA:21760"/>
        <dbReference type="ChEBI" id="CHEBI:57315"/>
        <dbReference type="ChEBI" id="CHEBI:57316"/>
        <dbReference type="EC" id="5.1.2.3"/>
    </reaction>
</comment>
<comment type="catalytic activity">
    <reaction evidence="1">
        <text>a (3Z)-enoyl-CoA = a 4-saturated (2E)-enoyl-CoA</text>
        <dbReference type="Rhea" id="RHEA:45900"/>
        <dbReference type="ChEBI" id="CHEBI:85097"/>
        <dbReference type="ChEBI" id="CHEBI:85489"/>
        <dbReference type="EC" id="5.3.3.8"/>
    </reaction>
</comment>
<comment type="catalytic activity">
    <reaction evidence="1">
        <text>a (3E)-enoyl-CoA = a 4-saturated (2E)-enoyl-CoA</text>
        <dbReference type="Rhea" id="RHEA:45228"/>
        <dbReference type="ChEBI" id="CHEBI:58521"/>
        <dbReference type="ChEBI" id="CHEBI:85097"/>
        <dbReference type="EC" id="5.3.3.8"/>
    </reaction>
</comment>
<comment type="pathway">
    <text evidence="1">Lipid metabolism; fatty acid beta-oxidation.</text>
</comment>
<comment type="subunit">
    <text evidence="1">Heterotetramer of two alpha chains (FadB) and two beta chains (FadA).</text>
</comment>
<comment type="similarity">
    <text evidence="1">In the N-terminal section; belongs to the enoyl-CoA hydratase/isomerase family.</text>
</comment>
<comment type="similarity">
    <text evidence="1">In the C-terminal section; belongs to the 3-hydroxyacyl-CoA dehydrogenase family.</text>
</comment>